<proteinExistence type="evidence at protein level"/>
<dbReference type="EMBL" id="GT277781">
    <property type="status" value="NOT_ANNOTATED_CDS"/>
    <property type="molecule type" value="mRNA"/>
</dbReference>
<dbReference type="EMBL" id="GT278277">
    <property type="status" value="NOT_ANNOTATED_CDS"/>
    <property type="molecule type" value="mRNA"/>
</dbReference>
<dbReference type="EMBL" id="GT279245">
    <property type="status" value="NOT_ANNOTATED_CDS"/>
    <property type="molecule type" value="mRNA"/>
</dbReference>
<dbReference type="EMBL" id="GT279877">
    <property type="status" value="NOT_ANNOTATED_CDS"/>
    <property type="molecule type" value="mRNA"/>
</dbReference>
<dbReference type="EMBL" id="GT281073">
    <property type="status" value="NOT_ANNOTATED_CDS"/>
    <property type="molecule type" value="mRNA"/>
</dbReference>
<dbReference type="EMBL" id="GT281112">
    <property type="status" value="NOT_ANNOTATED_CDS"/>
    <property type="molecule type" value="mRNA"/>
</dbReference>
<dbReference type="EMBL" id="GT282648">
    <property type="status" value="NOT_ANNOTATED_CDS"/>
    <property type="molecule type" value="mRNA"/>
</dbReference>
<dbReference type="EMBL" id="GT283139">
    <property type="status" value="NOT_ANNOTATED_CDS"/>
    <property type="molecule type" value="mRNA"/>
</dbReference>
<dbReference type="EMBL" id="GT283279">
    <property type="status" value="NOT_ANNOTATED_CDS"/>
    <property type="molecule type" value="mRNA"/>
</dbReference>
<dbReference type="EMBL" id="GT284077">
    <property type="status" value="NOT_ANNOTATED_CDS"/>
    <property type="molecule type" value="mRNA"/>
</dbReference>
<dbReference type="EMBL" id="EZ420205">
    <property type="status" value="NOT_ANNOTATED_CDS"/>
    <property type="molecule type" value="mRNA"/>
</dbReference>
<dbReference type="EMBL" id="EZ420206">
    <property type="status" value="NOT_ANNOTATED_CDS"/>
    <property type="molecule type" value="mRNA"/>
</dbReference>
<dbReference type="GO" id="GO:0005576">
    <property type="term" value="C:extracellular region"/>
    <property type="evidence" value="ECO:0007669"/>
    <property type="project" value="UniProtKB-SubCell"/>
</dbReference>
<reference evidence="5" key="1">
    <citation type="journal article" date="2010" name="Mol. Biol. Evol.">
        <title>Parallel evolution of nacre building gene sets in molluscs.</title>
        <authorList>
            <person name="Jackson D.J."/>
            <person name="McDougall C."/>
            <person name="Woodcroft B."/>
            <person name="Moase P."/>
            <person name="Rose R.A."/>
            <person name="Kube M."/>
            <person name="Reinhardt R."/>
            <person name="Rokhsar D.S."/>
            <person name="Montagnani C."/>
            <person name="Joubert C."/>
            <person name="Piquemal D."/>
            <person name="Degnan B.M."/>
        </authorList>
    </citation>
    <scope>NUCLEOTIDE SEQUENCE [MRNA]</scope>
    <scope>IDENTIFICATION</scope>
    <source>
        <tissue evidence="3">Mantle</tissue>
    </source>
</reference>
<reference key="2">
    <citation type="journal article" date="2012" name="Proc. Natl. Acad. Sci. U.S.A.">
        <title>Different secretory repertoires control the biomineralization processes of prism and nacre deposition of the pearl oyster shell.</title>
        <authorList>
            <person name="Marie B."/>
            <person name="Joubert C."/>
            <person name="Tayale A."/>
            <person name="Zanella-Cleon I."/>
            <person name="Belliard C."/>
            <person name="Piquemal D."/>
            <person name="Cochennec-Laureau N."/>
            <person name="Marin F."/>
            <person name="Gueguen Y."/>
            <person name="Montagnani C."/>
        </authorList>
    </citation>
    <scope>PROTEIN SEQUENCE OF 24-35</scope>
    <scope>SUBCELLULAR LOCATION</scope>
    <scope>TISSUE SPECIFICITY</scope>
    <source>
        <tissue>Shell</tissue>
    </source>
</reference>
<accession>P86966</accession>
<evidence type="ECO:0000255" key="1"/>
<evidence type="ECO:0000256" key="2">
    <source>
        <dbReference type="SAM" id="MobiDB-lite"/>
    </source>
</evidence>
<evidence type="ECO:0000269" key="3">
    <source>
    </source>
</evidence>
<evidence type="ECO:0000269" key="4">
    <source>
    </source>
</evidence>
<evidence type="ECO:0000305" key="5"/>
<protein>
    <recommendedName>
        <fullName>Glycine-rich protein 1</fullName>
    </recommendedName>
    <alternativeName>
        <fullName>Nacre uncharacterized shell protein 4</fullName>
        <shortName>NUSP4</shortName>
    </alternativeName>
</protein>
<keyword id="KW-0903">Direct protein sequencing</keyword>
<keyword id="KW-0964">Secreted</keyword>
<keyword id="KW-0732">Signal</keyword>
<name>GRP1_PINMA</name>
<sequence length="423" mass="38266">MKKICLTFVFLLSLFPIYSSQNKQAAGTIESGSSKSSGSSVGNAGPATPEFKSYKEEFSYWYTYYSVYYDVLNALNDDDDNKDKKKNDEDGKTETITSAKKQNGDDVKSDNSKSTAIKKSGGGKTDGEASKKNNSANSWKIILKLLGFNVVDKENGNGKGGSANNGGEGGATSAGSAGATSGAGANGGDAGETEAGEGNGASSDGAGGESGGAGAGAGAGAGAGAGGGAGAGAGAGASAGAGAGGAQGDAEAASAGSTAGSTSSGGAAASGASSGAGSSDSGQGASAGGAAAGASAASAAGGGGAAIGGSASAASGSAASSGSSAGASAAASGSAAGGNKFTKLIKIVQMASMMGGVENLMENPLALQMIMSSSGASAGASAAGSSAAGSSAAGAGGGAGAAGAAGASAXAGAGAGASARAGV</sequence>
<comment type="subcellular location">
    <subcellularLocation>
        <location evidence="4">Secreted</location>
    </subcellularLocation>
</comment>
<comment type="tissue specificity">
    <text evidence="4">Nacreous layer of shell (at protein level).</text>
</comment>
<comment type="sequence caution" evidence="5">
    <conflict type="frameshift">
        <sequence resource="EMBL" id="EZ420205"/>
    </conflict>
</comment>
<comment type="sequence caution" evidence="5">
    <conflict type="frameshift">
        <sequence resource="EMBL" id="GT279245"/>
    </conflict>
</comment>
<organism>
    <name type="scientific">Pinctada maxima</name>
    <name type="common">Silver-lipped pearl oyster</name>
    <name type="synonym">White-lipped pearl oyster</name>
    <dbReference type="NCBI Taxonomy" id="104660"/>
    <lineage>
        <taxon>Eukaryota</taxon>
        <taxon>Metazoa</taxon>
        <taxon>Spiralia</taxon>
        <taxon>Lophotrochozoa</taxon>
        <taxon>Mollusca</taxon>
        <taxon>Bivalvia</taxon>
        <taxon>Autobranchia</taxon>
        <taxon>Pteriomorphia</taxon>
        <taxon>Pterioida</taxon>
        <taxon>Pterioidea</taxon>
        <taxon>Pteriidae</taxon>
        <taxon>Pinctada</taxon>
    </lineage>
</organism>
<feature type="signal peptide" evidence="1">
    <location>
        <begin position="1"/>
        <end position="20"/>
    </location>
</feature>
<feature type="chain" id="PRO_0000413072" description="Glycine-rich protein 1" evidence="1">
    <location>
        <begin position="21"/>
        <end position="423"/>
    </location>
</feature>
<feature type="region of interest" description="Disordered" evidence="2">
    <location>
        <begin position="28"/>
        <end position="47"/>
    </location>
</feature>
<feature type="region of interest" description="Disordered" evidence="2">
    <location>
        <begin position="78"/>
        <end position="133"/>
    </location>
</feature>
<feature type="region of interest" description="Disordered" evidence="2">
    <location>
        <begin position="159"/>
        <end position="219"/>
    </location>
</feature>
<feature type="region of interest" description="Disordered" evidence="2">
    <location>
        <begin position="236"/>
        <end position="288"/>
    </location>
</feature>
<feature type="compositionally biased region" description="Low complexity" evidence="2">
    <location>
        <begin position="31"/>
        <end position="42"/>
    </location>
</feature>
<feature type="compositionally biased region" description="Basic and acidic residues" evidence="2">
    <location>
        <begin position="81"/>
        <end position="93"/>
    </location>
</feature>
<feature type="compositionally biased region" description="Basic and acidic residues" evidence="2">
    <location>
        <begin position="102"/>
        <end position="111"/>
    </location>
</feature>
<feature type="compositionally biased region" description="Gly residues" evidence="2">
    <location>
        <begin position="159"/>
        <end position="172"/>
    </location>
</feature>
<feature type="compositionally biased region" description="Low complexity" evidence="2">
    <location>
        <begin position="173"/>
        <end position="183"/>
    </location>
</feature>
<feature type="compositionally biased region" description="Gly residues" evidence="2">
    <location>
        <begin position="205"/>
        <end position="219"/>
    </location>
</feature>
<feature type="compositionally biased region" description="Gly residues" evidence="2">
    <location>
        <begin position="236"/>
        <end position="247"/>
    </location>
</feature>
<feature type="compositionally biased region" description="Low complexity" evidence="2">
    <location>
        <begin position="248"/>
        <end position="284"/>
    </location>
</feature>
<feature type="sequence conflict" description="In Ref. 1; GT279877/GT277781." evidence="5" ref="1">
    <original>N</original>
    <variation>D</variation>
    <location>
        <position position="76"/>
    </location>
</feature>
<feature type="sequence conflict" description="In Ref. 1; GT283279." evidence="5" ref="1">
    <original>T</original>
    <variation>S</variation>
    <location>
        <position position="97"/>
    </location>
</feature>
<feature type="sequence conflict" description="In Ref. 1; GT279877/GT277781." evidence="5" ref="1">
    <original>N</original>
    <variation>K</variation>
    <location>
        <position position="149"/>
    </location>
</feature>
<feature type="sequence conflict" description="In Ref. 1; GT282648." evidence="5" ref="1">
    <original>SG</original>
    <variation>FS</variation>
    <location>
        <begin position="181"/>
        <end position="182"/>
    </location>
</feature>
<feature type="sequence conflict" description="In Ref. 1; GT279877." evidence="5" ref="1">
    <original>G</original>
    <variation>S</variation>
    <location>
        <position position="182"/>
    </location>
</feature>
<feature type="sequence conflict" description="In Ref. 1; GT279877." evidence="5" ref="1">
    <original>G</original>
    <variation>R</variation>
    <location>
        <position position="196"/>
    </location>
</feature>
<feature type="sequence conflict" description="In Ref. 1; GT279877." evidence="5" ref="1">
    <original>G</original>
    <variation>R</variation>
    <location>
        <position position="198"/>
    </location>
</feature>
<feature type="sequence conflict" description="In Ref. 1; GT279877." evidence="5" ref="1">
    <original>A</original>
    <variation>P</variation>
    <location>
        <position position="201"/>
    </location>
</feature>
<feature type="sequence conflict" description="In Ref. 1; GT278277." evidence="5" ref="1">
    <original>A</original>
    <variation>T</variation>
    <location>
        <position position="217"/>
    </location>
</feature>
<feature type="sequence conflict" description="In Ref. 1; GT278277." evidence="5" ref="1">
    <original>A</original>
    <variation>T</variation>
    <location>
        <position position="225"/>
    </location>
</feature>
<feature type="sequence conflict" description="In Ref. 1; GT278277." evidence="5" ref="1">
    <original>A</original>
    <variation>T</variation>
    <location>
        <position position="229"/>
    </location>
</feature>
<feature type="sequence conflict" description="In Ref. 1; GT278277." evidence="5" ref="1">
    <original>A</original>
    <variation>T</variation>
    <location>
        <position position="233"/>
    </location>
</feature>
<feature type="sequence conflict" description="In Ref. 1; GT278277." evidence="5" ref="1">
    <original>A</original>
    <variation>P</variation>
    <location>
        <position position="235"/>
    </location>
</feature>
<feature type="sequence conflict" description="In Ref. 1; GT278277." evidence="5" ref="1">
    <original>A</original>
    <variation>T</variation>
    <location>
        <position position="237"/>
    </location>
</feature>
<feature type="sequence conflict" description="In Ref. 1; GT279245." evidence="5" ref="1">
    <original>A</original>
    <variation>V</variation>
    <location>
        <position position="366"/>
    </location>
</feature>
<feature type="sequence conflict" description="In Ref. 1; GT279245." evidence="5" ref="1">
    <original>SS</original>
    <variation>IF</variation>
    <location>
        <begin position="372"/>
        <end position="373"/>
    </location>
</feature>
<feature type="non-terminal residue" evidence="5">
    <location>
        <position position="423"/>
    </location>
</feature>